<accession>B6GZD3</accession>
<gene>
    <name evidence="1" type="primary">nudF-2</name>
    <name evidence="1" type="synonym">lis1-2</name>
    <name type="ORF">Pc12g01900</name>
</gene>
<keyword id="KW-0131">Cell cycle</keyword>
<keyword id="KW-0132">Cell division</keyword>
<keyword id="KW-0175">Coiled coil</keyword>
<keyword id="KW-0963">Cytoplasm</keyword>
<keyword id="KW-0206">Cytoskeleton</keyword>
<keyword id="KW-0493">Microtubule</keyword>
<keyword id="KW-0498">Mitosis</keyword>
<keyword id="KW-1185">Reference proteome</keyword>
<keyword id="KW-0677">Repeat</keyword>
<keyword id="KW-0813">Transport</keyword>
<keyword id="KW-0853">WD repeat</keyword>
<feature type="chain" id="PRO_0000405089" description="Nuclear distribution protein nudF 2">
    <location>
        <begin position="1"/>
        <end position="464"/>
    </location>
</feature>
<feature type="domain" description="LisH" evidence="1">
    <location>
        <begin position="9"/>
        <end position="41"/>
    </location>
</feature>
<feature type="repeat" description="WD 1">
    <location>
        <begin position="112"/>
        <end position="151"/>
    </location>
</feature>
<feature type="repeat" description="WD 2">
    <location>
        <begin position="154"/>
        <end position="195"/>
    </location>
</feature>
<feature type="repeat" description="WD 3">
    <location>
        <begin position="199"/>
        <end position="238"/>
    </location>
</feature>
<feature type="repeat" description="WD 4">
    <location>
        <begin position="241"/>
        <end position="280"/>
    </location>
</feature>
<feature type="repeat" description="WD 5">
    <location>
        <begin position="285"/>
        <end position="343"/>
    </location>
</feature>
<feature type="repeat" description="WD 6">
    <location>
        <begin position="344"/>
        <end position="383"/>
    </location>
</feature>
<feature type="repeat" description="WD 7">
    <location>
        <begin position="388"/>
        <end position="424"/>
    </location>
</feature>
<feature type="repeat" description="WD 8">
    <location>
        <begin position="426"/>
        <end position="464"/>
    </location>
</feature>
<feature type="coiled-coil region" evidence="1">
    <location>
        <begin position="63"/>
        <end position="88"/>
    </location>
</feature>
<organism>
    <name type="scientific">Penicillium rubens (strain ATCC 28089 / DSM 1075 / NRRL 1951 / Wisconsin 54-1255)</name>
    <name type="common">Penicillium chrysogenum</name>
    <dbReference type="NCBI Taxonomy" id="500485"/>
    <lineage>
        <taxon>Eukaryota</taxon>
        <taxon>Fungi</taxon>
        <taxon>Dikarya</taxon>
        <taxon>Ascomycota</taxon>
        <taxon>Pezizomycotina</taxon>
        <taxon>Eurotiomycetes</taxon>
        <taxon>Eurotiomycetidae</taxon>
        <taxon>Eurotiales</taxon>
        <taxon>Aspergillaceae</taxon>
        <taxon>Penicillium</taxon>
        <taxon>Penicillium chrysogenum species complex</taxon>
    </lineage>
</organism>
<reference key="1">
    <citation type="journal article" date="2008" name="Nat. Biotechnol.">
        <title>Genome sequencing and analysis of the filamentous fungus Penicillium chrysogenum.</title>
        <authorList>
            <person name="van den Berg M.A."/>
            <person name="Albang R."/>
            <person name="Albermann K."/>
            <person name="Badger J.H."/>
            <person name="Daran J.-M."/>
            <person name="Driessen A.J.M."/>
            <person name="Garcia-Estrada C."/>
            <person name="Fedorova N.D."/>
            <person name="Harris D.M."/>
            <person name="Heijne W.H.M."/>
            <person name="Joardar V.S."/>
            <person name="Kiel J.A.K.W."/>
            <person name="Kovalchuk A."/>
            <person name="Martin J.F."/>
            <person name="Nierman W.C."/>
            <person name="Nijland J.G."/>
            <person name="Pronk J.T."/>
            <person name="Roubos J.A."/>
            <person name="van der Klei I.J."/>
            <person name="van Peij N.N.M.E."/>
            <person name="Veenhuis M."/>
            <person name="von Doehren H."/>
            <person name="Wagner C."/>
            <person name="Wortman J.R."/>
            <person name="Bovenberg R.A.L."/>
        </authorList>
    </citation>
    <scope>NUCLEOTIDE SEQUENCE [LARGE SCALE GENOMIC DNA]</scope>
    <source>
        <strain>ATCC 28089 / DSM 1075 / NRRL 1951 / Wisconsin 54-1255</strain>
    </source>
</reference>
<evidence type="ECO:0000255" key="1">
    <source>
        <dbReference type="HAMAP-Rule" id="MF_03141"/>
    </source>
</evidence>
<name>LIS12_PENRW</name>
<proteinExistence type="inferred from homology"/>
<protein>
    <recommendedName>
        <fullName evidence="1">Nuclear distribution protein nudF 2</fullName>
    </recommendedName>
    <alternativeName>
        <fullName evidence="1">Lissencephaly-1 homolog 2</fullName>
        <shortName evidence="1">LIS-1 2</shortName>
    </alternativeName>
</protein>
<sequence>MPSSLTPQQAAELNKSIIAYLSAHGLAETLAAFRKESDFPDNMFDATAAKQYENLLERKWTSNSTLMKKLLALESHNKALRNELNSTRPSFLNRNADVNDWLPQHPIRSLESHRDSINCIAFHPKYSLIASGSGDLTIRIWDWEDSTLERTLKGHTMAVCDVDYGDTSSGILLASCSSDFTIKLWDTTDDYKNVKTLRGHDHIVSAVRFIPSGNLLASASRDMKVILWNVINGYRVKTIEDHTGWVRDISPSFDGQFLLSTGDDMTVRLWEISASQPICKFTATGHENRILCCAVAPATSFRYLASFLESRGSTIAAEITATGSRDKSIKLWDSHGRCIMTLTGHASWVRAIAFHPGGKYLLSVSDDKTMRCWDLSQQGRCVKSISNAHDGFITCLKWVPGIAKDTRNGTMTISYQRKGSAELPRSKLDEVGQPGVQIRCVLATGGEDQKIRVFALQANDRSHK</sequence>
<dbReference type="EMBL" id="AM920427">
    <property type="protein sequence ID" value="CAP79817.1"/>
    <property type="molecule type" value="Genomic_DNA"/>
</dbReference>
<dbReference type="RefSeq" id="XP_002557085.1">
    <property type="nucleotide sequence ID" value="XM_002557039.1"/>
</dbReference>
<dbReference type="SMR" id="B6GZD3"/>
<dbReference type="STRING" id="500485.B6GZD3"/>
<dbReference type="VEuPathDB" id="FungiDB:PCH_Pc12g01900"/>
<dbReference type="eggNOG" id="KOG0295">
    <property type="taxonomic scope" value="Eukaryota"/>
</dbReference>
<dbReference type="HOGENOM" id="CLU_000288_57_15_1"/>
<dbReference type="OMA" id="RGTCLMT"/>
<dbReference type="OrthoDB" id="10264588at2759"/>
<dbReference type="BioCyc" id="PCHR:PC12G01900-MONOMER"/>
<dbReference type="Proteomes" id="UP000000724">
    <property type="component" value="Contig Pc00c12"/>
</dbReference>
<dbReference type="GO" id="GO:0030126">
    <property type="term" value="C:COPI vesicle coat"/>
    <property type="evidence" value="ECO:0007669"/>
    <property type="project" value="TreeGrafter"/>
</dbReference>
<dbReference type="GO" id="GO:0005874">
    <property type="term" value="C:microtubule"/>
    <property type="evidence" value="ECO:0007669"/>
    <property type="project" value="UniProtKB-KW"/>
</dbReference>
<dbReference type="GO" id="GO:0005875">
    <property type="term" value="C:microtubule associated complex"/>
    <property type="evidence" value="ECO:0007669"/>
    <property type="project" value="UniProtKB-UniRule"/>
</dbReference>
<dbReference type="GO" id="GO:0000922">
    <property type="term" value="C:spindle pole"/>
    <property type="evidence" value="ECO:0007669"/>
    <property type="project" value="UniProtKB-SubCell"/>
</dbReference>
<dbReference type="GO" id="GO:0070840">
    <property type="term" value="F:dynein complex binding"/>
    <property type="evidence" value="ECO:0007669"/>
    <property type="project" value="UniProtKB-UniRule"/>
</dbReference>
<dbReference type="GO" id="GO:0051301">
    <property type="term" value="P:cell division"/>
    <property type="evidence" value="ECO:0007669"/>
    <property type="project" value="UniProtKB-KW"/>
</dbReference>
<dbReference type="GO" id="GO:0006888">
    <property type="term" value="P:endoplasmic reticulum to Golgi vesicle-mediated transport"/>
    <property type="evidence" value="ECO:0007669"/>
    <property type="project" value="TreeGrafter"/>
</dbReference>
<dbReference type="GO" id="GO:0000132">
    <property type="term" value="P:establishment of mitotic spindle orientation"/>
    <property type="evidence" value="ECO:0007669"/>
    <property type="project" value="UniProtKB-UniRule"/>
</dbReference>
<dbReference type="GO" id="GO:0006891">
    <property type="term" value="P:intra-Golgi vesicle-mediated transport"/>
    <property type="evidence" value="ECO:0007669"/>
    <property type="project" value="TreeGrafter"/>
</dbReference>
<dbReference type="GO" id="GO:0006886">
    <property type="term" value="P:intracellular protein transport"/>
    <property type="evidence" value="ECO:0007669"/>
    <property type="project" value="TreeGrafter"/>
</dbReference>
<dbReference type="GO" id="GO:0051012">
    <property type="term" value="P:microtubule sliding"/>
    <property type="evidence" value="ECO:0007669"/>
    <property type="project" value="UniProtKB-UniRule"/>
</dbReference>
<dbReference type="GO" id="GO:0006890">
    <property type="term" value="P:retrograde vesicle-mediated transport, Golgi to endoplasmic reticulum"/>
    <property type="evidence" value="ECO:0007669"/>
    <property type="project" value="TreeGrafter"/>
</dbReference>
<dbReference type="CDD" id="cd00200">
    <property type="entry name" value="WD40"/>
    <property type="match status" value="1"/>
</dbReference>
<dbReference type="FunFam" id="2.130.10.10:FF:000342">
    <property type="entry name" value="Nuclear distribution protein PAC1"/>
    <property type="match status" value="1"/>
</dbReference>
<dbReference type="Gene3D" id="1.20.960.30">
    <property type="match status" value="1"/>
</dbReference>
<dbReference type="Gene3D" id="2.130.10.10">
    <property type="entry name" value="YVTN repeat-like/Quinoprotein amine dehydrogenase"/>
    <property type="match status" value="1"/>
</dbReference>
<dbReference type="HAMAP" id="MF_03141">
    <property type="entry name" value="lis1"/>
    <property type="match status" value="1"/>
</dbReference>
<dbReference type="InterPro" id="IPR050844">
    <property type="entry name" value="Coatomer_complex_subunit"/>
</dbReference>
<dbReference type="InterPro" id="IPR017252">
    <property type="entry name" value="Dynein_regulator_LIS1"/>
</dbReference>
<dbReference type="InterPro" id="IPR020472">
    <property type="entry name" value="G-protein_beta_WD-40_rep"/>
</dbReference>
<dbReference type="InterPro" id="IPR037190">
    <property type="entry name" value="LIS1_N"/>
</dbReference>
<dbReference type="InterPro" id="IPR006594">
    <property type="entry name" value="LisH"/>
</dbReference>
<dbReference type="InterPro" id="IPR056795">
    <property type="entry name" value="PAC1-like_LisH-like_dom"/>
</dbReference>
<dbReference type="InterPro" id="IPR015943">
    <property type="entry name" value="WD40/YVTN_repeat-like_dom_sf"/>
</dbReference>
<dbReference type="InterPro" id="IPR019775">
    <property type="entry name" value="WD40_repeat_CS"/>
</dbReference>
<dbReference type="InterPro" id="IPR036322">
    <property type="entry name" value="WD40_repeat_dom_sf"/>
</dbReference>
<dbReference type="InterPro" id="IPR001680">
    <property type="entry name" value="WD40_rpt"/>
</dbReference>
<dbReference type="PANTHER" id="PTHR19876">
    <property type="entry name" value="COATOMER"/>
    <property type="match status" value="1"/>
</dbReference>
<dbReference type="PANTHER" id="PTHR19876:SF2">
    <property type="entry name" value="COATOMER SUBUNIT BETA"/>
    <property type="match status" value="1"/>
</dbReference>
<dbReference type="Pfam" id="PF24951">
    <property type="entry name" value="LisH_PAC1"/>
    <property type="match status" value="1"/>
</dbReference>
<dbReference type="Pfam" id="PF00400">
    <property type="entry name" value="WD40"/>
    <property type="match status" value="6"/>
</dbReference>
<dbReference type="PIRSF" id="PIRSF037647">
    <property type="entry name" value="Dynein_regulator_Lis1"/>
    <property type="match status" value="1"/>
</dbReference>
<dbReference type="PRINTS" id="PR00320">
    <property type="entry name" value="GPROTEINBRPT"/>
</dbReference>
<dbReference type="SMART" id="SM00667">
    <property type="entry name" value="LisH"/>
    <property type="match status" value="1"/>
</dbReference>
<dbReference type="SMART" id="SM00320">
    <property type="entry name" value="WD40"/>
    <property type="match status" value="7"/>
</dbReference>
<dbReference type="SUPFAM" id="SSF109925">
    <property type="entry name" value="Lissencephaly-1 protein (Lis-1, PAF-AH alpha) N-terminal domain"/>
    <property type="match status" value="1"/>
</dbReference>
<dbReference type="SUPFAM" id="SSF50978">
    <property type="entry name" value="WD40 repeat-like"/>
    <property type="match status" value="1"/>
</dbReference>
<dbReference type="PROSITE" id="PS50896">
    <property type="entry name" value="LISH"/>
    <property type="match status" value="1"/>
</dbReference>
<dbReference type="PROSITE" id="PS00678">
    <property type="entry name" value="WD_REPEATS_1"/>
    <property type="match status" value="4"/>
</dbReference>
<dbReference type="PROSITE" id="PS50082">
    <property type="entry name" value="WD_REPEATS_2"/>
    <property type="match status" value="5"/>
</dbReference>
<dbReference type="PROSITE" id="PS50294">
    <property type="entry name" value="WD_REPEATS_REGION"/>
    <property type="match status" value="1"/>
</dbReference>
<comment type="function">
    <text evidence="1">Positively regulates the activity of the minus-end directed microtubule motor protein dynein. May enhance dynein-mediated microtubule sliding by targeting dynein to the microtubule plus end. Required for nuclear migration during vegetative growth as well as development. Required for retrograde early endosome (EE) transport from the hyphal tip. Required for localization of dynein to the mitotic spindle poles. Recruits additional proteins to the dynein complex at SPBs.</text>
</comment>
<comment type="subunit">
    <text evidence="1">Self-associates. Interacts with nudE and dynein.</text>
</comment>
<comment type="subcellular location">
    <subcellularLocation>
        <location evidence="1">Cytoplasm</location>
        <location evidence="1">Cytoskeleton</location>
    </subcellularLocation>
    <subcellularLocation>
        <location evidence="1">Cytoplasm</location>
        <location evidence="1">Cytoskeleton</location>
        <location evidence="1">Spindle pole</location>
    </subcellularLocation>
    <text evidence="1">Localizes to the plus ends of microtubules at the hyphal tip and the mitotic spindle poles.</text>
</comment>
<comment type="domain">
    <text evidence="1">Dimerization mediated by the LisH domain may be required to activate dynein.</text>
</comment>
<comment type="similarity">
    <text evidence="1">Belongs to the WD repeat LIS1/nudF family.</text>
</comment>